<evidence type="ECO:0000250" key="1">
    <source>
        <dbReference type="UniProtKB" id="P16456"/>
    </source>
</evidence>
<evidence type="ECO:0000250" key="2">
    <source>
        <dbReference type="UniProtKB" id="P49903"/>
    </source>
</evidence>
<evidence type="ECO:0000250" key="3">
    <source>
        <dbReference type="UniProtKB" id="P97364"/>
    </source>
</evidence>
<evidence type="ECO:0000255" key="4"/>
<evidence type="ECO:0000256" key="5">
    <source>
        <dbReference type="SAM" id="MobiDB-lite"/>
    </source>
</evidence>
<evidence type="ECO:0000269" key="6">
    <source>
    </source>
</evidence>
<evidence type="ECO:0000305" key="7"/>
<evidence type="ECO:0007744" key="8">
    <source>
    </source>
</evidence>
<evidence type="ECO:0007744" key="9">
    <source>
    </source>
</evidence>
<feature type="initiator methionine" description="Removed" evidence="8">
    <location>
        <position position="1"/>
    </location>
</feature>
<feature type="chain" id="PRO_0000127650" description="Selenide, water dikinase 2">
    <location>
        <begin position="2"/>
        <end position="448"/>
    </location>
</feature>
<feature type="region of interest" description="Disordered" evidence="5">
    <location>
        <begin position="85"/>
        <end position="107"/>
    </location>
</feature>
<feature type="active site" evidence="4">
    <location>
        <position position="60"/>
    </location>
</feature>
<feature type="binding site" description="in other chain" evidence="2">
    <location>
        <position position="63"/>
    </location>
    <ligand>
        <name>ATP</name>
        <dbReference type="ChEBI" id="CHEBI:30616"/>
        <note>ligand shared between dimeric partners</note>
    </ligand>
</feature>
<feature type="binding site" description="in other chain" evidence="2">
    <location>
        <begin position="118"/>
        <end position="120"/>
    </location>
    <ligand>
        <name>ATP</name>
        <dbReference type="ChEBI" id="CHEBI:30616"/>
        <note>ligand shared between dimeric partners</note>
    </ligand>
</feature>
<feature type="binding site" evidence="2">
    <location>
        <position position="120"/>
    </location>
    <ligand>
        <name>Mg(2+)</name>
        <dbReference type="ChEBI" id="CHEBI:18420"/>
    </ligand>
</feature>
<feature type="binding site" description="in other chain" evidence="2">
    <location>
        <position position="138"/>
    </location>
    <ligand>
        <name>ATP</name>
        <dbReference type="ChEBI" id="CHEBI:30616"/>
        <note>ligand shared between dimeric partners</note>
    </ligand>
</feature>
<feature type="binding site" description="in other chain" evidence="2">
    <location>
        <position position="161"/>
    </location>
    <ligand>
        <name>ATP</name>
        <dbReference type="ChEBI" id="CHEBI:30616"/>
        <note>ligand shared between dimeric partners</note>
    </ligand>
</feature>
<feature type="binding site" evidence="2">
    <location>
        <position position="161"/>
    </location>
    <ligand>
        <name>Mg(2+)</name>
        <dbReference type="ChEBI" id="CHEBI:18420"/>
    </ligand>
</feature>
<feature type="binding site" evidence="2">
    <location>
        <begin position="212"/>
        <end position="215"/>
    </location>
    <ligand>
        <name>ATP</name>
        <dbReference type="ChEBI" id="CHEBI:30616"/>
        <note>ligand shared between dimeric partners</note>
    </ligand>
</feature>
<feature type="binding site" evidence="2">
    <location>
        <position position="316"/>
    </location>
    <ligand>
        <name>Mg(2+)</name>
        <dbReference type="ChEBI" id="CHEBI:18420"/>
    </ligand>
</feature>
<feature type="site" description="Important for catalytic activity" evidence="1">
    <location>
        <position position="63"/>
    </location>
</feature>
<feature type="non-standard amino acid" description="Selenocysteine">
    <location>
        <position position="60"/>
    </location>
</feature>
<feature type="modified residue" description="N-acetylalanine" evidence="8">
    <location>
        <position position="2"/>
    </location>
</feature>
<feature type="modified residue" description="Phosphoserine" evidence="3">
    <location>
        <position position="46"/>
    </location>
</feature>
<feature type="modified residue" description="Phosphoserine" evidence="9">
    <location>
        <position position="97"/>
    </location>
</feature>
<feature type="sequence variant" id="VAR_052345" description="In dbSNP:rs1804600.">
    <original>P</original>
    <variation>A</variation>
    <location>
        <position position="269"/>
    </location>
</feature>
<comment type="function">
    <text evidence="2">Synthesizes selenophosphate from selenide and ATP.</text>
</comment>
<comment type="catalytic activity">
    <reaction evidence="2">
        <text>hydrogenselenide + ATP + H2O = selenophosphate + AMP + phosphate + 2 H(+)</text>
        <dbReference type="Rhea" id="RHEA:18737"/>
        <dbReference type="ChEBI" id="CHEBI:15377"/>
        <dbReference type="ChEBI" id="CHEBI:15378"/>
        <dbReference type="ChEBI" id="CHEBI:16144"/>
        <dbReference type="ChEBI" id="CHEBI:29317"/>
        <dbReference type="ChEBI" id="CHEBI:30616"/>
        <dbReference type="ChEBI" id="CHEBI:43474"/>
        <dbReference type="ChEBI" id="CHEBI:456215"/>
        <dbReference type="EC" id="2.7.9.3"/>
    </reaction>
</comment>
<comment type="cofactor">
    <cofactor evidence="2">
        <name>Mg(2+)</name>
        <dbReference type="ChEBI" id="CHEBI:18420"/>
    </cofactor>
    <text evidence="2">Binds 1 Mg(2+) ion per monomer.</text>
</comment>
<comment type="subunit">
    <text evidence="2">Homodimer.</text>
</comment>
<comment type="interaction">
    <interactant intactId="EBI-3937791">
        <id>Q99611</id>
    </interactant>
    <interactant intactId="EBI-714091">
        <id>P49903</id>
        <label>SEPHS1</label>
    </interactant>
    <organismsDiffer>false</organismsDiffer>
    <experiments>2</experiments>
</comment>
<comment type="PTM">
    <text evidence="6">Truncated SEPHS2 proteins produced by failed UGA/Sec decoding are ubiquitinated by the CRL2(KLHDC3) complex, which recognizes the glycine (Gly) at the C-terminus of truncated SEPHS2 proteins.</text>
</comment>
<comment type="similarity">
    <text evidence="7">Belongs to the selenophosphate synthase 1 family. Class I subfamily.</text>
</comment>
<gene>
    <name type="primary">SEPHS2</name>
    <name type="synonym">SPS2</name>
</gene>
<organism>
    <name type="scientific">Homo sapiens</name>
    <name type="common">Human</name>
    <dbReference type="NCBI Taxonomy" id="9606"/>
    <lineage>
        <taxon>Eukaryota</taxon>
        <taxon>Metazoa</taxon>
        <taxon>Chordata</taxon>
        <taxon>Craniata</taxon>
        <taxon>Vertebrata</taxon>
        <taxon>Euteleostomi</taxon>
        <taxon>Mammalia</taxon>
        <taxon>Eutheria</taxon>
        <taxon>Euarchontoglires</taxon>
        <taxon>Primates</taxon>
        <taxon>Haplorrhini</taxon>
        <taxon>Catarrhini</taxon>
        <taxon>Hominidae</taxon>
        <taxon>Homo</taxon>
    </lineage>
</organism>
<sequence>MAEASATGACGEAMAAAEGSSGPAGLTLGRSFSNYRPFEPQALGLSPSWRLTGFSGMKGUGCKVPQEALLKLLAGLTRPDVRPPLGRGLVGGQEEASQEAGLPAGAGPSPTFPALGIGMDSCVIPLRHGGLSLVQTTDFFYPLVEDPYMMGRIACANVLSDLYAMGITECDNMLMLLSVSQSMSEEEREKVTPLMVKGFRDAAEEGGTAVTGGQTVVNPWIIIGGVATVVCQPNEFIMPDSAVVGDVLVLTKPLGTQVAVNAHQWLDNPERWNKVKMVVSREEVELAYQEAMFNMATLNRTAAGLMHTFNAHAATDITGFGILGHSQNLAKQQRNEVSFVIHNLPIIAKMAAVSKASGRFGLLQGTSAETSGGLLICLPREQAARFCSEIKSSKYGEGHQAWIVGIVEKGNRTARIIDKPRVIEVLPRGATAAVLAPDSSNASSEPSS</sequence>
<dbReference type="EC" id="2.7.9.3" evidence="2"/>
<dbReference type="EMBL" id="U43286">
    <property type="protein sequence ID" value="AAC50958.2"/>
    <property type="molecule type" value="mRNA"/>
</dbReference>
<dbReference type="EMBL" id="AC116348">
    <property type="status" value="NOT_ANNOTATED_CDS"/>
    <property type="molecule type" value="Genomic_DNA"/>
</dbReference>
<dbReference type="EMBL" id="BC002381">
    <property type="protein sequence ID" value="AAH02381.3"/>
    <property type="molecule type" value="mRNA"/>
</dbReference>
<dbReference type="EMBL" id="BC016643">
    <property type="protein sequence ID" value="AAH16643.1"/>
    <property type="molecule type" value="mRNA"/>
</dbReference>
<dbReference type="CCDS" id="CCDS42150.1"/>
<dbReference type="RefSeq" id="NP_036380.2">
    <property type="nucleotide sequence ID" value="NM_012248.3"/>
</dbReference>
<dbReference type="BioGRID" id="116588">
    <property type="interactions" value="33"/>
</dbReference>
<dbReference type="CORUM" id="Q99611"/>
<dbReference type="FunCoup" id="Q99611">
    <property type="interactions" value="103"/>
</dbReference>
<dbReference type="IntAct" id="Q99611">
    <property type="interactions" value="11"/>
</dbReference>
<dbReference type="MINT" id="Q99611"/>
<dbReference type="STRING" id="9606.ENSP00000418669"/>
<dbReference type="iPTMnet" id="Q99611"/>
<dbReference type="PhosphoSitePlus" id="Q99611"/>
<dbReference type="BioMuta" id="SEPHS2"/>
<dbReference type="DMDM" id="172044671"/>
<dbReference type="jPOST" id="Q99611"/>
<dbReference type="MassIVE" id="Q99611"/>
<dbReference type="PaxDb" id="9606-ENSP00000418669"/>
<dbReference type="PeptideAtlas" id="Q99611"/>
<dbReference type="ProteomicsDB" id="78354"/>
<dbReference type="Pumba" id="Q99611"/>
<dbReference type="Antibodypedia" id="43619">
    <property type="antibodies" value="112 antibodies from 21 providers"/>
</dbReference>
<dbReference type="DNASU" id="22928"/>
<dbReference type="Ensembl" id="ENST00000478753.5">
    <property type="protein sequence ID" value="ENSP00000418669.3"/>
    <property type="gene ID" value="ENSG00000179918.19"/>
</dbReference>
<dbReference type="GeneID" id="22928"/>
<dbReference type="KEGG" id="hsa:22928"/>
<dbReference type="MANE-Select" id="ENST00000478753.5">
    <property type="protein sequence ID" value="ENSP00000418669.3"/>
    <property type="RefSeq nucleotide sequence ID" value="NM_012248.4"/>
    <property type="RefSeq protein sequence ID" value="NP_036380.2"/>
</dbReference>
<dbReference type="AGR" id="HGNC:19686"/>
<dbReference type="CTD" id="22928"/>
<dbReference type="DisGeNET" id="22928"/>
<dbReference type="GeneCards" id="SEPHS2"/>
<dbReference type="HGNC" id="HGNC:19686">
    <property type="gene designation" value="SEPHS2"/>
</dbReference>
<dbReference type="HPA" id="ENSG00000179918">
    <property type="expression patterns" value="Tissue enhanced (liver)"/>
</dbReference>
<dbReference type="MIM" id="606218">
    <property type="type" value="gene"/>
</dbReference>
<dbReference type="neXtProt" id="NX_Q99611"/>
<dbReference type="OpenTargets" id="ENSG00000179918"/>
<dbReference type="PharmGKB" id="PA134868765"/>
<dbReference type="VEuPathDB" id="HostDB:ENSG00000179918"/>
<dbReference type="eggNOG" id="KOG3939">
    <property type="taxonomic scope" value="Eukaryota"/>
</dbReference>
<dbReference type="GeneTree" id="ENSGT00390000000950"/>
<dbReference type="InParanoid" id="Q99611"/>
<dbReference type="OMA" id="RWNKINM"/>
<dbReference type="OrthoDB" id="409395at2759"/>
<dbReference type="PAN-GO" id="Q99611">
    <property type="GO annotations" value="3 GO annotations based on evolutionary models"/>
</dbReference>
<dbReference type="PhylomeDB" id="Q99611"/>
<dbReference type="TreeFam" id="TF313811"/>
<dbReference type="BRENDA" id="2.7.9.3">
    <property type="organism ID" value="2681"/>
</dbReference>
<dbReference type="PathwayCommons" id="Q99611"/>
<dbReference type="Reactome" id="R-HSA-2408557">
    <property type="pathway name" value="Selenocysteine synthesis"/>
</dbReference>
<dbReference type="SignaLink" id="Q99611"/>
<dbReference type="BioGRID-ORCS" id="22928">
    <property type="hits" value="360 hits in 1129 CRISPR screens"/>
</dbReference>
<dbReference type="ChiTaRS" id="SEPHS2">
    <property type="organism name" value="human"/>
</dbReference>
<dbReference type="GenomeRNAi" id="22928"/>
<dbReference type="Pharos" id="Q99611">
    <property type="development level" value="Tdark"/>
</dbReference>
<dbReference type="PRO" id="PR:Q99611"/>
<dbReference type="Proteomes" id="UP000005640">
    <property type="component" value="Chromosome 16"/>
</dbReference>
<dbReference type="RNAct" id="Q99611">
    <property type="molecule type" value="protein"/>
</dbReference>
<dbReference type="Bgee" id="ENSG00000179918">
    <property type="expression patterns" value="Expressed in jejunal mucosa and 207 other cell types or tissues"/>
</dbReference>
<dbReference type="GO" id="GO:0005737">
    <property type="term" value="C:cytoplasm"/>
    <property type="evidence" value="ECO:0000318"/>
    <property type="project" value="GO_Central"/>
</dbReference>
<dbReference type="GO" id="GO:0005829">
    <property type="term" value="C:cytosol"/>
    <property type="evidence" value="ECO:0000304"/>
    <property type="project" value="Reactome"/>
</dbReference>
<dbReference type="GO" id="GO:0005524">
    <property type="term" value="F:ATP binding"/>
    <property type="evidence" value="ECO:0007669"/>
    <property type="project" value="UniProtKB-KW"/>
</dbReference>
<dbReference type="GO" id="GO:0046872">
    <property type="term" value="F:metal ion binding"/>
    <property type="evidence" value="ECO:0007669"/>
    <property type="project" value="UniProtKB-KW"/>
</dbReference>
<dbReference type="GO" id="GO:0004756">
    <property type="term" value="F:selenide, water dikinase activity"/>
    <property type="evidence" value="ECO:0000318"/>
    <property type="project" value="GO_Central"/>
</dbReference>
<dbReference type="GO" id="GO:0001887">
    <property type="term" value="P:selenium compound metabolic process"/>
    <property type="evidence" value="ECO:0007669"/>
    <property type="project" value="Ensembl"/>
</dbReference>
<dbReference type="GO" id="GO:0016260">
    <property type="term" value="P:selenocysteine biosynthetic process"/>
    <property type="evidence" value="ECO:0000318"/>
    <property type="project" value="GO_Central"/>
</dbReference>
<dbReference type="GO" id="GO:0016259">
    <property type="term" value="P:selenocysteine metabolic process"/>
    <property type="evidence" value="ECO:0000304"/>
    <property type="project" value="Reactome"/>
</dbReference>
<dbReference type="CDD" id="cd02195">
    <property type="entry name" value="SelD"/>
    <property type="match status" value="1"/>
</dbReference>
<dbReference type="FunFam" id="3.90.650.10:FF:000003">
    <property type="entry name" value="Selenide, water dikinase 1"/>
    <property type="match status" value="1"/>
</dbReference>
<dbReference type="FunFam" id="3.30.1330.10:FF:000018">
    <property type="entry name" value="selenide, water dikinase 2"/>
    <property type="match status" value="1"/>
</dbReference>
<dbReference type="Gene3D" id="3.90.650.10">
    <property type="entry name" value="PurM-like C-terminal domain"/>
    <property type="match status" value="1"/>
</dbReference>
<dbReference type="Gene3D" id="3.30.1330.10">
    <property type="entry name" value="PurM-like, N-terminal domain"/>
    <property type="match status" value="1"/>
</dbReference>
<dbReference type="InterPro" id="IPR010918">
    <property type="entry name" value="PurM-like_C_dom"/>
</dbReference>
<dbReference type="InterPro" id="IPR036676">
    <property type="entry name" value="PurM-like_C_sf"/>
</dbReference>
<dbReference type="InterPro" id="IPR016188">
    <property type="entry name" value="PurM-like_N"/>
</dbReference>
<dbReference type="InterPro" id="IPR036921">
    <property type="entry name" value="PurM-like_N_sf"/>
</dbReference>
<dbReference type="InterPro" id="IPR004536">
    <property type="entry name" value="SPS/SelD"/>
</dbReference>
<dbReference type="NCBIfam" id="TIGR00476">
    <property type="entry name" value="selD"/>
    <property type="match status" value="1"/>
</dbReference>
<dbReference type="PANTHER" id="PTHR10256">
    <property type="entry name" value="SELENIDE, WATER DIKINASE"/>
    <property type="match status" value="1"/>
</dbReference>
<dbReference type="PANTHER" id="PTHR10256:SF1">
    <property type="entry name" value="SELENIDE, WATER DIKINASE 2"/>
    <property type="match status" value="1"/>
</dbReference>
<dbReference type="Pfam" id="PF00586">
    <property type="entry name" value="AIRS"/>
    <property type="match status" value="1"/>
</dbReference>
<dbReference type="Pfam" id="PF02769">
    <property type="entry name" value="AIRS_C"/>
    <property type="match status" value="1"/>
</dbReference>
<dbReference type="SUPFAM" id="SSF56042">
    <property type="entry name" value="PurM C-terminal domain-like"/>
    <property type="match status" value="1"/>
</dbReference>
<dbReference type="SUPFAM" id="SSF55326">
    <property type="entry name" value="PurM N-terminal domain-like"/>
    <property type="match status" value="1"/>
</dbReference>
<proteinExistence type="evidence at protein level"/>
<keyword id="KW-0007">Acetylation</keyword>
<keyword id="KW-0067">ATP-binding</keyword>
<keyword id="KW-0418">Kinase</keyword>
<keyword id="KW-0460">Magnesium</keyword>
<keyword id="KW-0479">Metal-binding</keyword>
<keyword id="KW-0547">Nucleotide-binding</keyword>
<keyword id="KW-0597">Phosphoprotein</keyword>
<keyword id="KW-1267">Proteomics identification</keyword>
<keyword id="KW-1185">Reference proteome</keyword>
<keyword id="KW-0711">Selenium</keyword>
<keyword id="KW-0712">Selenocysteine</keyword>
<keyword id="KW-0808">Transferase</keyword>
<keyword id="KW-0832">Ubl conjugation</keyword>
<accession>Q99611</accession>
<accession>Q9BUQ2</accession>
<protein>
    <recommendedName>
        <fullName>Selenide, water dikinase 2</fullName>
        <ecNumber evidence="2">2.7.9.3</ecNumber>
    </recommendedName>
    <alternativeName>
        <fullName>Selenium donor protein 2</fullName>
    </alternativeName>
    <alternativeName>
        <fullName>Selenophosphate synthase 2</fullName>
    </alternativeName>
</protein>
<name>SPS2_HUMAN</name>
<reference key="1">
    <citation type="journal article" date="1995" name="Development">
        <title>A new approach to the study of haematopoietic development in the yolk sac and embryoid bodies.</title>
        <authorList>
            <person name="Guimaraes M.J."/>
            <person name="Bazan J.F."/>
            <person name="Zlotnik A."/>
            <person name="Wiles M.V."/>
            <person name="Grimaldi J.C."/>
            <person name="Lee F."/>
            <person name="McClanahan T."/>
        </authorList>
    </citation>
    <scope>NUCLEOTIDE SEQUENCE [MRNA]</scope>
</reference>
<reference key="2">
    <citation type="journal article" date="1996" name="Proc. Natl. Acad. Sci. U.S.A.">
        <title>Identification of a novel selD homolog from eukaryotes, bacteria, and archaea: is there an autoregulatory mechanism in selenocysteine metabolism?</title>
        <authorList>
            <person name="Guimaraes M.J."/>
            <person name="Peterson D."/>
            <person name="Vicari A."/>
            <person name="Cocks B.G."/>
            <person name="Copeland N.G."/>
            <person name="Gilbert D.J."/>
            <person name="Jenkins N.A."/>
            <person name="Ferrick D.A."/>
            <person name="Kastelein R."/>
            <person name="Bazan J.F."/>
            <person name="Zlotnik A."/>
        </authorList>
    </citation>
    <scope>NUCLEOTIDE SEQUENCE [MRNA]</scope>
</reference>
<reference key="3">
    <citation type="journal article" date="2004" name="Nature">
        <title>The sequence and analysis of duplication-rich human chromosome 16.</title>
        <authorList>
            <person name="Martin J."/>
            <person name="Han C."/>
            <person name="Gordon L.A."/>
            <person name="Terry A."/>
            <person name="Prabhakar S."/>
            <person name="She X."/>
            <person name="Xie G."/>
            <person name="Hellsten U."/>
            <person name="Chan Y.M."/>
            <person name="Altherr M."/>
            <person name="Couronne O."/>
            <person name="Aerts A."/>
            <person name="Bajorek E."/>
            <person name="Black S."/>
            <person name="Blumer H."/>
            <person name="Branscomb E."/>
            <person name="Brown N.C."/>
            <person name="Bruno W.J."/>
            <person name="Buckingham J.M."/>
            <person name="Callen D.F."/>
            <person name="Campbell C.S."/>
            <person name="Campbell M.L."/>
            <person name="Campbell E.W."/>
            <person name="Caoile C."/>
            <person name="Challacombe J.F."/>
            <person name="Chasteen L.A."/>
            <person name="Chertkov O."/>
            <person name="Chi H.C."/>
            <person name="Christensen M."/>
            <person name="Clark L.M."/>
            <person name="Cohn J.D."/>
            <person name="Denys M."/>
            <person name="Detter J.C."/>
            <person name="Dickson M."/>
            <person name="Dimitrijevic-Bussod M."/>
            <person name="Escobar J."/>
            <person name="Fawcett J.J."/>
            <person name="Flowers D."/>
            <person name="Fotopulos D."/>
            <person name="Glavina T."/>
            <person name="Gomez M."/>
            <person name="Gonzales E."/>
            <person name="Goodstein D."/>
            <person name="Goodwin L.A."/>
            <person name="Grady D.L."/>
            <person name="Grigoriev I."/>
            <person name="Groza M."/>
            <person name="Hammon N."/>
            <person name="Hawkins T."/>
            <person name="Haydu L."/>
            <person name="Hildebrand C.E."/>
            <person name="Huang W."/>
            <person name="Israni S."/>
            <person name="Jett J."/>
            <person name="Jewett P.B."/>
            <person name="Kadner K."/>
            <person name="Kimball H."/>
            <person name="Kobayashi A."/>
            <person name="Krawczyk M.-C."/>
            <person name="Leyba T."/>
            <person name="Longmire J.L."/>
            <person name="Lopez F."/>
            <person name="Lou Y."/>
            <person name="Lowry S."/>
            <person name="Ludeman T."/>
            <person name="Manohar C.F."/>
            <person name="Mark G.A."/>
            <person name="McMurray K.L."/>
            <person name="Meincke L.J."/>
            <person name="Morgan J."/>
            <person name="Moyzis R.K."/>
            <person name="Mundt M.O."/>
            <person name="Munk A.C."/>
            <person name="Nandkeshwar R.D."/>
            <person name="Pitluck S."/>
            <person name="Pollard M."/>
            <person name="Predki P."/>
            <person name="Parson-Quintana B."/>
            <person name="Ramirez L."/>
            <person name="Rash S."/>
            <person name="Retterer J."/>
            <person name="Ricke D.O."/>
            <person name="Robinson D.L."/>
            <person name="Rodriguez A."/>
            <person name="Salamov A."/>
            <person name="Saunders E.H."/>
            <person name="Scott D."/>
            <person name="Shough T."/>
            <person name="Stallings R.L."/>
            <person name="Stalvey M."/>
            <person name="Sutherland R.D."/>
            <person name="Tapia R."/>
            <person name="Tesmer J.G."/>
            <person name="Thayer N."/>
            <person name="Thompson L.S."/>
            <person name="Tice H."/>
            <person name="Torney D.C."/>
            <person name="Tran-Gyamfi M."/>
            <person name="Tsai M."/>
            <person name="Ulanovsky L.E."/>
            <person name="Ustaszewska A."/>
            <person name="Vo N."/>
            <person name="White P.S."/>
            <person name="Williams A.L."/>
            <person name="Wills P.L."/>
            <person name="Wu J.-R."/>
            <person name="Wu K."/>
            <person name="Yang J."/>
            <person name="DeJong P."/>
            <person name="Bruce D."/>
            <person name="Doggett N.A."/>
            <person name="Deaven L."/>
            <person name="Schmutz J."/>
            <person name="Grimwood J."/>
            <person name="Richardson P."/>
            <person name="Rokhsar D.S."/>
            <person name="Eichler E.E."/>
            <person name="Gilna P."/>
            <person name="Lucas S.M."/>
            <person name="Myers R.M."/>
            <person name="Rubin E.M."/>
            <person name="Pennacchio L.A."/>
        </authorList>
    </citation>
    <scope>NUCLEOTIDE SEQUENCE [LARGE SCALE GENOMIC DNA]</scope>
</reference>
<reference key="4">
    <citation type="journal article" date="2004" name="Genome Res.">
        <title>The status, quality, and expansion of the NIH full-length cDNA project: the Mammalian Gene Collection (MGC).</title>
        <authorList>
            <consortium name="The MGC Project Team"/>
        </authorList>
    </citation>
    <scope>NUCLEOTIDE SEQUENCE [LARGE SCALE MRNA]</scope>
    <source>
        <tissue>Muscle</tissue>
        <tissue>Skin</tissue>
    </source>
</reference>
<reference key="5">
    <citation type="journal article" date="2012" name="Proc. Natl. Acad. Sci. U.S.A.">
        <title>N-terminal acetylome analyses and functional insights of the N-terminal acetyltransferase NatB.</title>
        <authorList>
            <person name="Van Damme P."/>
            <person name="Lasa M."/>
            <person name="Polevoda B."/>
            <person name="Gazquez C."/>
            <person name="Elosegui-Artola A."/>
            <person name="Kim D.S."/>
            <person name="De Juan-Pardo E."/>
            <person name="Demeyer K."/>
            <person name="Hole K."/>
            <person name="Larrea E."/>
            <person name="Timmerman E."/>
            <person name="Prieto J."/>
            <person name="Arnesen T."/>
            <person name="Sherman F."/>
            <person name="Gevaert K."/>
            <person name="Aldabe R."/>
        </authorList>
    </citation>
    <scope>ACETYLATION [LARGE SCALE ANALYSIS] AT ALA-2</scope>
    <scope>CLEAVAGE OF INITIATOR METHIONINE [LARGE SCALE ANALYSIS]</scope>
    <scope>IDENTIFICATION BY MASS SPECTROMETRY [LARGE SCALE ANALYSIS]</scope>
</reference>
<reference key="6">
    <citation type="journal article" date="2014" name="J. Proteomics">
        <title>An enzyme assisted RP-RPLC approach for in-depth analysis of human liver phosphoproteome.</title>
        <authorList>
            <person name="Bian Y."/>
            <person name="Song C."/>
            <person name="Cheng K."/>
            <person name="Dong M."/>
            <person name="Wang F."/>
            <person name="Huang J."/>
            <person name="Sun D."/>
            <person name="Wang L."/>
            <person name="Ye M."/>
            <person name="Zou H."/>
        </authorList>
    </citation>
    <scope>PHOSPHORYLATION [LARGE SCALE ANALYSIS] AT SER-97</scope>
    <scope>IDENTIFICATION BY MASS SPECTROMETRY [LARGE SCALE ANALYSIS]</scope>
    <source>
        <tissue>Liver</tissue>
    </source>
</reference>
<reference key="7">
    <citation type="journal article" date="2015" name="Science">
        <title>SELENOPROTEINS. CRL2 aids elimination of truncated selenoproteins produced by failed UGA/Sec decoding.</title>
        <authorList>
            <person name="Lin H.C."/>
            <person name="Ho S.C."/>
            <person name="Chen Y.Y."/>
            <person name="Khoo K.H."/>
            <person name="Hsu P.H."/>
            <person name="Yen H.C."/>
        </authorList>
    </citation>
    <scope>UBIQUITINATION</scope>
</reference>